<accession>Q91WZ8</accession>
<accession>Q3TWK1</accession>
<accession>Q6WXQ1</accession>
<accession>Q80ZN4</accession>
<accession>Q9CY43</accession>
<sequence length="352" mass="39651">MLETLRERLLSVQQDFTSGLKTLSDKSREAKVKGKPRTAPRLPKYSAGLELLSRYEDAWAALHRRAKECADAGELVDSEVVMLSAHWEKKRTSLNELQGQLQQLPALLQDLESLMASLAHLETSFEEVENHLLHLEDLCGQCELERHKQAQAQHLESYKKSKRKELEAFKAELDTEHTQKALEMEHTQQLKLKERQKFFEEAFQQDMEQYLSTGYLQIAERREPMGSMSSMEVNVDVLEQMDLMDISDQEALDVFLNSGGEDNIVMSPGVEMESNPNQNEMSLQIPSPSESASQPPASPSACTDLDTADAPLIQSDEEEVQVDTALVTLHTDRKSTPGVSDDSDQCDSTQDI</sequence>
<evidence type="ECO:0000250" key="1"/>
<evidence type="ECO:0000250" key="2">
    <source>
        <dbReference type="UniProtKB" id="Q96EV8"/>
    </source>
</evidence>
<evidence type="ECO:0000255" key="3"/>
<evidence type="ECO:0000256" key="4">
    <source>
        <dbReference type="SAM" id="MobiDB-lite"/>
    </source>
</evidence>
<evidence type="ECO:0000269" key="5">
    <source>
    </source>
</evidence>
<evidence type="ECO:0000269" key="6">
    <source>
    </source>
</evidence>
<evidence type="ECO:0000269" key="7">
    <source>
    </source>
</evidence>
<evidence type="ECO:0000269" key="8">
    <source>
    </source>
</evidence>
<evidence type="ECO:0000269" key="9">
    <source>
    </source>
</evidence>
<evidence type="ECO:0000269" key="10">
    <source>
    </source>
</evidence>
<evidence type="ECO:0000269" key="11">
    <source>
    </source>
</evidence>
<evidence type="ECO:0000269" key="12">
    <source>
    </source>
</evidence>
<evidence type="ECO:0000269" key="13">
    <source>
    </source>
</evidence>
<evidence type="ECO:0000269" key="14">
    <source>
    </source>
</evidence>
<evidence type="ECO:0000269" key="15">
    <source>
    </source>
</evidence>
<evidence type="ECO:0000269" key="16">
    <source>
    </source>
</evidence>
<evidence type="ECO:0000269" key="17">
    <source>
    </source>
</evidence>
<evidence type="ECO:0000269" key="18">
    <source>
    </source>
</evidence>
<evidence type="ECO:0000269" key="19">
    <source>
    </source>
</evidence>
<evidence type="ECO:0000269" key="20">
    <source>
    </source>
</evidence>
<evidence type="ECO:0000269" key="21">
    <source>
    </source>
</evidence>
<evidence type="ECO:0000269" key="22">
    <source>
    </source>
</evidence>
<evidence type="ECO:0000269" key="23">
    <source>
    </source>
</evidence>
<evidence type="ECO:0000269" key="24">
    <source>
    </source>
</evidence>
<evidence type="ECO:0000269" key="25">
    <source>
    </source>
</evidence>
<evidence type="ECO:0000269" key="26">
    <source>
    </source>
</evidence>
<evidence type="ECO:0000269" key="27">
    <source>
    </source>
</evidence>
<evidence type="ECO:0000269" key="28">
    <source>
    </source>
</evidence>
<evidence type="ECO:0000269" key="29">
    <source>
    </source>
</evidence>
<evidence type="ECO:0000303" key="30">
    <source>
    </source>
</evidence>
<evidence type="ECO:0000303" key="31">
    <source>
    </source>
</evidence>
<evidence type="ECO:0000305" key="32"/>
<evidence type="ECO:0007744" key="33">
    <source>
    </source>
</evidence>
<reference key="1">
    <citation type="journal article" date="2001" name="J. Biol. Chem.">
        <title>Dysbindin, a novel coiled-coil-containing protein that interacts with the dystrobrevins in muscle and brain.</title>
        <authorList>
            <person name="Benson M.A."/>
            <person name="Newey S.E."/>
            <person name="Martin-Rendon E."/>
            <person name="Hawkes R."/>
            <person name="Blake D.J."/>
        </authorList>
    </citation>
    <scope>NUCLEOTIDE SEQUENCE [MRNA] (ISOFORMS 1 AND 2)</scope>
    <scope>TISSUE SPECIFICITY</scope>
    <scope>INTERACTION WITH DTNA AND DTNB</scope>
    <scope>SUBCELLULAR LOCATION</scope>
    <source>
        <strain>C57BL/6J</strain>
        <tissue>Brain</tissue>
        <tissue>Liver</tissue>
    </source>
</reference>
<reference key="2">
    <citation type="journal article" date="2003" name="Nat. Genet.">
        <title>Hermansky-Pudlak syndrome type 7 (HPS-7) results from mutant dysbindin, a member of the biogenesis of lysosome-related organelles complex 1 (BLOC-1).</title>
        <authorList>
            <person name="Li W."/>
            <person name="Zhang Q."/>
            <person name="Oiso N."/>
            <person name="Novak E.K."/>
            <person name="Gautam R."/>
            <person name="O'Brien E.P."/>
            <person name="Tinsley C.L."/>
            <person name="Blake D.J."/>
            <person name="Spritz R.A."/>
            <person name="Copeland N.G."/>
            <person name="Jenkins N.A."/>
            <person name="Amato D."/>
            <person name="Roe B.A."/>
            <person name="Starcevic M."/>
            <person name="Dell'Angelica E.C."/>
            <person name="Elliott R.W."/>
            <person name="Mishra V."/>
            <person name="Kingsmore S.F."/>
            <person name="Paylor R.E."/>
            <person name="Swank R.T."/>
        </authorList>
    </citation>
    <scope>NUCLEOTIDE SEQUENCE [MRNA] (ISOFORM 3)</scope>
    <scope>FUNCTION</scope>
    <scope>ALTERNATIVE SPLICING</scope>
    <scope>TISSUE SPECIFICITY</scope>
    <scope>INTERACTION WITH DTNB; BLOC1S5 AND BLOC1S6</scope>
    <scope>DISEASE</scope>
    <source>
        <strain>DBA/2J</strain>
        <tissue>Kidney</tissue>
    </source>
</reference>
<reference key="3">
    <citation type="journal article" date="2005" name="Science">
        <title>The transcriptional landscape of the mammalian genome.</title>
        <authorList>
            <person name="Carninci P."/>
            <person name="Kasukawa T."/>
            <person name="Katayama S."/>
            <person name="Gough J."/>
            <person name="Frith M.C."/>
            <person name="Maeda N."/>
            <person name="Oyama R."/>
            <person name="Ravasi T."/>
            <person name="Lenhard B."/>
            <person name="Wells C."/>
            <person name="Kodzius R."/>
            <person name="Shimokawa K."/>
            <person name="Bajic V.B."/>
            <person name="Brenner S.E."/>
            <person name="Batalov S."/>
            <person name="Forrest A.R."/>
            <person name="Zavolan M."/>
            <person name="Davis M.J."/>
            <person name="Wilming L.G."/>
            <person name="Aidinis V."/>
            <person name="Allen J.E."/>
            <person name="Ambesi-Impiombato A."/>
            <person name="Apweiler R."/>
            <person name="Aturaliya R.N."/>
            <person name="Bailey T.L."/>
            <person name="Bansal M."/>
            <person name="Baxter L."/>
            <person name="Beisel K.W."/>
            <person name="Bersano T."/>
            <person name="Bono H."/>
            <person name="Chalk A.M."/>
            <person name="Chiu K.P."/>
            <person name="Choudhary V."/>
            <person name="Christoffels A."/>
            <person name="Clutterbuck D.R."/>
            <person name="Crowe M.L."/>
            <person name="Dalla E."/>
            <person name="Dalrymple B.P."/>
            <person name="de Bono B."/>
            <person name="Della Gatta G."/>
            <person name="di Bernardo D."/>
            <person name="Down T."/>
            <person name="Engstrom P."/>
            <person name="Fagiolini M."/>
            <person name="Faulkner G."/>
            <person name="Fletcher C.F."/>
            <person name="Fukushima T."/>
            <person name="Furuno M."/>
            <person name="Futaki S."/>
            <person name="Gariboldi M."/>
            <person name="Georgii-Hemming P."/>
            <person name="Gingeras T.R."/>
            <person name="Gojobori T."/>
            <person name="Green R.E."/>
            <person name="Gustincich S."/>
            <person name="Harbers M."/>
            <person name="Hayashi Y."/>
            <person name="Hensch T.K."/>
            <person name="Hirokawa N."/>
            <person name="Hill D."/>
            <person name="Huminiecki L."/>
            <person name="Iacono M."/>
            <person name="Ikeo K."/>
            <person name="Iwama A."/>
            <person name="Ishikawa T."/>
            <person name="Jakt M."/>
            <person name="Kanapin A."/>
            <person name="Katoh M."/>
            <person name="Kawasawa Y."/>
            <person name="Kelso J."/>
            <person name="Kitamura H."/>
            <person name="Kitano H."/>
            <person name="Kollias G."/>
            <person name="Krishnan S.P."/>
            <person name="Kruger A."/>
            <person name="Kummerfeld S.K."/>
            <person name="Kurochkin I.V."/>
            <person name="Lareau L.F."/>
            <person name="Lazarevic D."/>
            <person name="Lipovich L."/>
            <person name="Liu J."/>
            <person name="Liuni S."/>
            <person name="McWilliam S."/>
            <person name="Madan Babu M."/>
            <person name="Madera M."/>
            <person name="Marchionni L."/>
            <person name="Matsuda H."/>
            <person name="Matsuzawa S."/>
            <person name="Miki H."/>
            <person name="Mignone F."/>
            <person name="Miyake S."/>
            <person name="Morris K."/>
            <person name="Mottagui-Tabar S."/>
            <person name="Mulder N."/>
            <person name="Nakano N."/>
            <person name="Nakauchi H."/>
            <person name="Ng P."/>
            <person name="Nilsson R."/>
            <person name="Nishiguchi S."/>
            <person name="Nishikawa S."/>
            <person name="Nori F."/>
            <person name="Ohara O."/>
            <person name="Okazaki Y."/>
            <person name="Orlando V."/>
            <person name="Pang K.C."/>
            <person name="Pavan W.J."/>
            <person name="Pavesi G."/>
            <person name="Pesole G."/>
            <person name="Petrovsky N."/>
            <person name="Piazza S."/>
            <person name="Reed J."/>
            <person name="Reid J.F."/>
            <person name="Ring B.Z."/>
            <person name="Ringwald M."/>
            <person name="Rost B."/>
            <person name="Ruan Y."/>
            <person name="Salzberg S.L."/>
            <person name="Sandelin A."/>
            <person name="Schneider C."/>
            <person name="Schoenbach C."/>
            <person name="Sekiguchi K."/>
            <person name="Semple C.A."/>
            <person name="Seno S."/>
            <person name="Sessa L."/>
            <person name="Sheng Y."/>
            <person name="Shibata Y."/>
            <person name="Shimada H."/>
            <person name="Shimada K."/>
            <person name="Silva D."/>
            <person name="Sinclair B."/>
            <person name="Sperling S."/>
            <person name="Stupka E."/>
            <person name="Sugiura K."/>
            <person name="Sultana R."/>
            <person name="Takenaka Y."/>
            <person name="Taki K."/>
            <person name="Tammoja K."/>
            <person name="Tan S.L."/>
            <person name="Tang S."/>
            <person name="Taylor M.S."/>
            <person name="Tegner J."/>
            <person name="Teichmann S.A."/>
            <person name="Ueda H.R."/>
            <person name="van Nimwegen E."/>
            <person name="Verardo R."/>
            <person name="Wei C.L."/>
            <person name="Yagi K."/>
            <person name="Yamanishi H."/>
            <person name="Zabarovsky E."/>
            <person name="Zhu S."/>
            <person name="Zimmer A."/>
            <person name="Hide W."/>
            <person name="Bult C."/>
            <person name="Grimmond S.M."/>
            <person name="Teasdale R.D."/>
            <person name="Liu E.T."/>
            <person name="Brusic V."/>
            <person name="Quackenbush J."/>
            <person name="Wahlestedt C."/>
            <person name="Mattick J.S."/>
            <person name="Hume D.A."/>
            <person name="Kai C."/>
            <person name="Sasaki D."/>
            <person name="Tomaru Y."/>
            <person name="Fukuda S."/>
            <person name="Kanamori-Katayama M."/>
            <person name="Suzuki M."/>
            <person name="Aoki J."/>
            <person name="Arakawa T."/>
            <person name="Iida J."/>
            <person name="Imamura K."/>
            <person name="Itoh M."/>
            <person name="Kato T."/>
            <person name="Kawaji H."/>
            <person name="Kawagashira N."/>
            <person name="Kawashima T."/>
            <person name="Kojima M."/>
            <person name="Kondo S."/>
            <person name="Konno H."/>
            <person name="Nakano K."/>
            <person name="Ninomiya N."/>
            <person name="Nishio T."/>
            <person name="Okada M."/>
            <person name="Plessy C."/>
            <person name="Shibata K."/>
            <person name="Shiraki T."/>
            <person name="Suzuki S."/>
            <person name="Tagami M."/>
            <person name="Waki K."/>
            <person name="Watahiki A."/>
            <person name="Okamura-Oho Y."/>
            <person name="Suzuki H."/>
            <person name="Kawai J."/>
            <person name="Hayashizaki Y."/>
        </authorList>
    </citation>
    <scope>NUCLEOTIDE SEQUENCE [LARGE SCALE MRNA] (ISOFORM 1)</scope>
    <source>
        <strain>C57BL/6J</strain>
    </source>
</reference>
<reference key="4">
    <citation type="journal article" date="2004" name="Genome Res.">
        <title>The status, quality, and expansion of the NIH full-length cDNA project: the Mammalian Gene Collection (MGC).</title>
        <authorList>
            <consortium name="The MGC Project Team"/>
        </authorList>
    </citation>
    <scope>NUCLEOTIDE SEQUENCE [LARGE SCALE MRNA] (ISOFORM 1)</scope>
    <source>
        <strain>FVB/N-3</strain>
        <tissue>Limb</tissue>
        <tissue>Liver</tissue>
        <tissue>Mammary tumor</tissue>
    </source>
</reference>
<reference key="5">
    <citation type="journal article" date="1991" name="Genet. Res.">
        <title>Sandy: a new mouse model for platelet storage pool deficiency.</title>
        <authorList>
            <person name="Swank R.T."/>
            <person name="Sweet H.O."/>
            <person name="Davisson M.T."/>
            <person name="Reddington M."/>
            <person name="Novak E.K."/>
        </authorList>
    </citation>
    <scope>DISEASE</scope>
</reference>
<reference key="6">
    <citation type="journal article" date="2004" name="Hum. Mol. Genet.">
        <title>Evidence of novel neuronal functions of dysbindin, a susceptibility gene for schizophrenia.</title>
        <authorList>
            <person name="Numakawa T."/>
            <person name="Yagasaki Y."/>
            <person name="Ishimoto T."/>
            <person name="Okada T."/>
            <person name="Suzuki T."/>
            <person name="Iwata N."/>
            <person name="Ozaki N."/>
            <person name="Taguchi T."/>
            <person name="Tatsumi M."/>
            <person name="Kamijima K."/>
            <person name="Straub R.E."/>
            <person name="Weinberger D.R."/>
            <person name="Kunugi H."/>
            <person name="Hashimoto R."/>
        </authorList>
    </citation>
    <scope>DISRUPTION PHENOTYPE</scope>
    <scope>FUNCTION</scope>
</reference>
<reference key="7">
    <citation type="journal article" date="2004" name="J. Biol. Chem.">
        <title>Myospryn is a novel binding partner for dysbindin in muscle.</title>
        <authorList>
            <person name="Benson M.A."/>
            <person name="Tinsley C.L."/>
            <person name="Blake D.J."/>
        </authorList>
    </citation>
    <scope>INTERACTION WITH CMYA5</scope>
</reference>
<reference key="8">
    <citation type="journal article" date="2006" name="Biochem. J.">
        <title>Reinvestigation of the dysbindin subunit of BLOC-1 (biogenesis of lysosome-related organelles complex-1) as a dystrobrevin-binding protein.</title>
        <authorList>
            <person name="Nazarian R."/>
            <person name="Starcevic M."/>
            <person name="Spencer M.J."/>
            <person name="Dell'Angelica E.C."/>
        </authorList>
    </citation>
    <scope>FUNCTION</scope>
    <scope>SUBUNIT</scope>
</reference>
<reference key="9">
    <citation type="journal article" date="2006" name="Hum. Mol. Genet.">
        <title>Dysbindin-1 is a synaptic and microtubular protein that binds brain snapin.</title>
        <authorList>
            <person name="Talbot K."/>
            <person name="Cho D.S."/>
            <person name="Ong W.Y."/>
            <person name="Benson M.A."/>
            <person name="Han L.Y."/>
            <person name="Kazi H.A."/>
            <person name="Kamins J."/>
            <person name="Hahn C.G."/>
            <person name="Blake D.J."/>
            <person name="Arnold S.E."/>
        </authorList>
    </citation>
    <scope>TISSUE SPECIFICITY</scope>
    <scope>SUBCELLULAR LOCATION</scope>
    <scope>INTERACTION WITH SNAPIN</scope>
</reference>
<reference key="10">
    <citation type="journal article" date="2006" name="Mol. Biol. Cell">
        <title>BLOC-1 interacts with BLOC-2 and the AP-3 complex to facilitate protein trafficking on endosomes.</title>
        <authorList>
            <person name="Di Pietro S.M."/>
            <person name="Falcon-Perez J.M."/>
            <person name="Tenza D."/>
            <person name="Setty S.R."/>
            <person name="Marks M.S."/>
            <person name="Raposo G."/>
            <person name="Dell'Angelica E.C."/>
        </authorList>
    </citation>
    <scope>FUNCTION</scope>
    <scope>SUBUNIT</scope>
    <scope>SUBCELLULAR LOCATION</scope>
</reference>
<reference key="11">
    <citation type="journal article" date="2006" name="Mol. Biol. Cell">
        <title>BLOC-1 complex deficiency alters the targeting of adaptor protein complex-3 cargoes.</title>
        <authorList>
            <person name="Salazar G."/>
            <person name="Craige B."/>
            <person name="Styers M.L."/>
            <person name="Newell-Litwa K.A."/>
            <person name="Doucette M.M."/>
            <person name="Wainer B.H."/>
            <person name="Falcon-Perez J.M."/>
            <person name="Dell'Angelica E.C."/>
            <person name="Peden A.A."/>
            <person name="Werner E."/>
            <person name="Faundez V."/>
        </authorList>
    </citation>
    <scope>FUNCTION</scope>
    <scope>SUBCELLULAR LOCATION</scope>
    <scope>TISSUE SPECIFICITY</scope>
</reference>
<reference key="12">
    <citation type="journal article" date="2007" name="Arch. Biochem. Biophys.">
        <title>RNF151, a testis-specific RING finger protein, interacts with dysbindin.</title>
        <authorList>
            <person name="Nian H."/>
            <person name="Fan C."/>
            <person name="Liao S."/>
            <person name="Shi Y."/>
            <person name="Zhang K."/>
            <person name="Liu Y."/>
            <person name="Han C."/>
        </authorList>
    </citation>
    <scope>INTERACTION WITH RNF151</scope>
    <scope>SUBCELLULAR LOCATION</scope>
</reference>
<reference key="13">
    <citation type="journal article" date="2008" name="Biochem. Biophys. Res. Commun.">
        <title>Behavioral abnormalities and dopamine reductions in sdy mutant mice with a deletion in Dtnbp1, a susceptibility gene for schizophrenia.</title>
        <authorList>
            <person name="Hattori S."/>
            <person name="Murotani T."/>
            <person name="Matsuzaki S."/>
            <person name="Ishizuka T."/>
            <person name="Kumamoto N."/>
            <person name="Takeda M."/>
            <person name="Tohyama M."/>
            <person name="Yamatodani A."/>
            <person name="Kunugi H."/>
            <person name="Hashimoto R."/>
        </authorList>
    </citation>
    <scope>FUNCTION</scope>
    <scope>DISEASE</scope>
</reference>
<reference key="14">
    <citation type="journal article" date="2008" name="J. Cell Biol.">
        <title>DTNBP1, a schizophrenia susceptibility gene, affects kinetics of transmitter release.</title>
        <authorList>
            <person name="Chen X.W."/>
            <person name="Feng Y.Q."/>
            <person name="Hao C.J."/>
            <person name="Guo X.L."/>
            <person name="He X."/>
            <person name="Zhou Z.Y."/>
            <person name="Guo N."/>
            <person name="Huang H.P."/>
            <person name="Xiong W."/>
            <person name="Zheng H."/>
            <person name="Zuo P.L."/>
            <person name="Zhang C.X."/>
            <person name="Li W."/>
            <person name="Zhou Z."/>
        </authorList>
    </citation>
    <scope>DISEASE</scope>
    <scope>FUNCTION</scope>
</reference>
<reference key="15">
    <citation type="journal article" date="2008" name="Mol. Brain">
        <title>Impaired long-term memory retention and working memory in sdy mutant mice with a deletion in Dtnbp1, a susceptibility gene for schizophrenia.</title>
        <authorList>
            <person name="Takao K."/>
            <person name="Toyama K."/>
            <person name="Nakanishi K."/>
            <person name="Hattori S."/>
            <person name="Takamura H."/>
            <person name="Takeda M."/>
            <person name="Miyakawa T."/>
            <person name="Hashimoto R."/>
        </authorList>
    </citation>
    <scope>DISEASE</scope>
</reference>
<reference key="16">
    <citation type="book" date="2009" name="Handbook of neurochemistry and molecular neurobiology (3rd ed.)">
        <title>Dysbindin-1 and its protein family with special attention to the potential role of dysbindin-1 in neuronal functions and the pathophysiology of schizophrenia.</title>
        <editorList>
            <person name="Javitt D.C."/>
            <person name="Kantrowitz J."/>
        </editorList>
        <authorList>
            <person name="Talbot K."/>
            <person name="Ong W.-Y."/>
            <person name="Blake D.J."/>
            <person name="Tang J."/>
            <person name="Louneva N."/>
            <person name="Carlson G.C."/>
            <person name="Arnold S.E."/>
        </authorList>
    </citation>
    <scope>REVIEW</scope>
</reference>
<reference key="17">
    <citation type="journal article" date="2009" name="Behav. Brain Res.">
        <title>Behavioral characterization of dysbindin-1 deficient sandy mice.</title>
        <authorList>
            <person name="Bhardwaj S.K."/>
            <person name="Baharnoori M."/>
            <person name="Sharif-Askari B."/>
            <person name="Kamath A."/>
            <person name="Williams S."/>
            <person name="Srivastava L.K."/>
        </authorList>
    </citation>
    <scope>DISEASE</scope>
    <scope>FUNCTION</scope>
</reference>
<reference key="18">
    <citation type="journal article" date="2009" name="Biochem. Biophys. Res. Commun.">
        <title>Dysbindin engages in c-Jun N-terminal kinase activity and cytoskeletal organization.</title>
        <authorList>
            <person name="Kubota K."/>
            <person name="Kumamoto N."/>
            <person name="Matsuzaki S."/>
            <person name="Hashimoto R."/>
            <person name="Hattori T."/>
            <person name="Okuda H."/>
            <person name="Takamura H."/>
            <person name="Takeda M."/>
            <person name="Katayama T."/>
            <person name="Tohyama M."/>
        </authorList>
    </citation>
    <scope>DISRUPTION PHENOTYPE</scope>
    <scope>FUNCTION</scope>
</reference>
<reference key="19">
    <citation type="journal article" date="2009" name="Genes Brain Behav.">
        <title>Neurobehavioral abnormalities in the dysbindin-1 mutant, sandy, on a C57BL/6J genetic background.</title>
        <authorList>
            <person name="Cox M.M."/>
            <person name="Tucker A.M."/>
            <person name="Tang J."/>
            <person name="Talbot K."/>
            <person name="Richer D.C."/>
            <person name="Yeh L."/>
            <person name="Arnold S.E."/>
        </authorList>
    </citation>
    <scope>DISEASE</scope>
</reference>
<reference key="20">
    <citation type="journal article" date="2009" name="Prog. Brain Res.">
        <title>The sandy (sdy) mouse: a dysbindin-1 mutant relevant to schizophrenia research.</title>
        <authorList>
            <person name="Talbot K."/>
        </authorList>
    </citation>
    <scope>REVIEW ON DISEASE</scope>
</reference>
<reference key="21">
    <citation type="journal article" date="2010" name="Cell">
        <title>A tissue-specific atlas of mouse protein phosphorylation and expression.</title>
        <authorList>
            <person name="Huttlin E.L."/>
            <person name="Jedrychowski M.P."/>
            <person name="Elias J.E."/>
            <person name="Goswami T."/>
            <person name="Rad R."/>
            <person name="Beausoleil S.A."/>
            <person name="Villen J."/>
            <person name="Haas W."/>
            <person name="Sowa M.E."/>
            <person name="Gygi S.P."/>
        </authorList>
    </citation>
    <scope>PHOSPHORYLATION [LARGE SCALE ANALYSIS] AT SER-340 AND SER-343</scope>
    <scope>IDENTIFICATION BY MASS SPECTROMETRY [LARGE SCALE ANALYSIS]</scope>
    <source>
        <tissue>Kidney</tissue>
        <tissue>Lung</tissue>
        <tissue>Spleen</tissue>
        <tissue>Testis</tissue>
    </source>
</reference>
<reference key="22">
    <citation type="journal article" date="2010" name="J. Biol. Chem.">
        <title>Nucleocytoplasmic shuttling of dysbindin-1, a schizophrenia-related protein, regulates synapsin I expression.</title>
        <authorList>
            <person name="Fei E."/>
            <person name="Ma X."/>
            <person name="Zhu C."/>
            <person name="Xue T."/>
            <person name="Yan J."/>
            <person name="Xu Y."/>
            <person name="Zhou J."/>
            <person name="Wang G."/>
        </authorList>
    </citation>
    <scope>DISEASE</scope>
    <scope>FUNCTION</scope>
</reference>
<reference key="23">
    <citation type="journal article" date="2010" name="Mol. Psychiatry">
        <title>The dysbindin-containing complex (BLOC-1) in brain: developmental regulation, interaction with SNARE proteins and role in neurite outgrowth.</title>
        <authorList>
            <person name="Ghiani C.A."/>
            <person name="Starcevic M."/>
            <person name="Rodriguez-Fernandez I.A."/>
            <person name="Nazarian R."/>
            <person name="Cheli V.T."/>
            <person name="Chan L.N."/>
            <person name="Malvar J.S."/>
            <person name="de Vellis J."/>
            <person name="Sabatti C."/>
            <person name="Dell'Angelica E.C."/>
        </authorList>
    </citation>
    <scope>FUNCTION</scope>
    <scope>SUBUNIT</scope>
    <scope>SUBCELLULAR LOCATION</scope>
    <scope>TISSUE SPECIFICITY</scope>
</reference>
<reference key="24">
    <citation type="journal article" date="2009" name="Neurochem. Int.">
        <title>Direct interaction of dysbindin with the AP-3 complex via its mu subunit.</title>
        <authorList>
            <person name="Taneichi-Kuroda S."/>
            <person name="Taya S."/>
            <person name="Hikita T."/>
            <person name="Fujino Y."/>
            <person name="Kaibuchi K."/>
        </authorList>
    </citation>
    <scope>TISSUE SPECIFICITY</scope>
    <scope>INTERACTION WITH THE AP-C COMPLEX</scope>
    <scope>FUNCTION</scope>
</reference>
<reference key="25">
    <citation type="journal article" date="2010" name="Neurosci. Lett.">
        <title>Dysfunction of dopamine release in the prefrontal cortex of dysbindin deficient sandy mice: an in vivo microdialysis study.</title>
        <authorList>
            <person name="Nagai T."/>
            <person name="Kitahara Y."/>
            <person name="Shiraki A."/>
            <person name="Hikita T."/>
            <person name="Taya S."/>
            <person name="Kaibuchi K."/>
            <person name="Yamada K."/>
        </authorList>
    </citation>
    <scope>FUNCTION</scope>
</reference>
<reference key="26">
    <citation type="journal article" date="2009" name="PLoS ONE">
        <title>Dysbindin-1, a schizophrenia-related protein, functionally interacts with the DNA-dependent protein kinase complex in an isoform-dependent manner.</title>
        <authorList>
            <person name="Oyama S."/>
            <person name="Yamakawa H."/>
            <person name="Sasagawa N."/>
            <person name="Hosoi Y."/>
            <person name="Futai E."/>
            <person name="Ishiura S."/>
        </authorList>
    </citation>
    <scope>INTERACTION WITH AP3B2</scope>
</reference>
<reference key="27">
    <citation type="journal article" date="2009" name="Proc. Natl. Acad. Sci. U.S.A.">
        <title>Role of dysbindin in dopamine receptor trafficking and cortical GABA function.</title>
        <authorList>
            <person name="Ji Y."/>
            <person name="Yang F."/>
            <person name="Papaleo F."/>
            <person name="Wang H.X."/>
            <person name="Gao W.J."/>
            <person name="Weinberger D.R."/>
            <person name="Lu B."/>
        </authorList>
    </citation>
    <scope>FUNCTION</scope>
</reference>
<reference key="28">
    <citation type="journal article" date="2011" name="Mol. Biol. Cell">
        <title>The schizophrenia susceptibility factor dysbindin and its associated complex sort cargoes from cell bodies to the synapse.</title>
        <authorList>
            <person name="Larimore J."/>
            <person name="Tornieri K."/>
            <person name="Ryder P.V."/>
            <person name="Gokhale A."/>
            <person name="Zlatic S.A."/>
            <person name="Craige B."/>
            <person name="Lee J.D."/>
            <person name="Talbot K."/>
            <person name="Pare J.F."/>
            <person name="Smith Y."/>
            <person name="Faundez V."/>
        </authorList>
    </citation>
    <scope>FUNCTION</scope>
    <scope>ASSOCIATION WITH THE AP-3 COMPLEX</scope>
    <scope>INTERACTION WITH PI4K2A</scope>
</reference>
<reference key="29">
    <citation type="journal article" date="2012" name="Mol. Psychiatry">
        <title>Dysbindin-1 modulates prefrontal cortical activity and schizophrenia-like behaviors via dopamine/D2 pathways.</title>
        <authorList>
            <person name="Papaleo F."/>
            <person name="Yang F."/>
            <person name="Garcia S."/>
            <person name="Chen J."/>
            <person name="Lu B."/>
            <person name="Crawley J.N."/>
            <person name="Weinberger D.R."/>
        </authorList>
    </citation>
    <scope>DISRUPTION PHENOTYPE</scope>
    <scope>FUNCTION</scope>
</reference>
<reference key="30">
    <citation type="journal article" date="2012" name="Traffic">
        <title>The BLOS1-interacting protein KXD1 is involved in the biogenesis of lysosome-related organelles.</title>
        <authorList>
            <person name="Yang Q."/>
            <person name="He X."/>
            <person name="Yang L."/>
            <person name="Zhou Z."/>
            <person name="Cullinane A.R."/>
            <person name="Wei A."/>
            <person name="Zhang Z."/>
            <person name="Hao Z."/>
            <person name="Zhang A."/>
            <person name="He M."/>
            <person name="Feng Y."/>
            <person name="Gao X."/>
            <person name="Gahl W.A."/>
            <person name="Huizing M."/>
            <person name="Li W."/>
        </authorList>
    </citation>
    <scope>INTERACTION WITH KXD1</scope>
</reference>
<proteinExistence type="evidence at protein level"/>
<protein>
    <recommendedName>
        <fullName>Dysbindin</fullName>
    </recommendedName>
    <alternativeName>
        <fullName>Biogenesis of lysosome-related organelles complex 1 subunit 8</fullName>
        <shortName>BLOC-1 subunit 8</shortName>
    </alternativeName>
    <alternativeName>
        <fullName>Dysbindin-1</fullName>
    </alternativeName>
    <alternativeName>
        <fullName>Dystrobrevin-binding protein 1</fullName>
    </alternativeName>
    <alternativeName>
        <fullName>Hermansky-Pudlak syndrome 7 protein homolog</fullName>
        <shortName>HPS7 protein homolog</shortName>
    </alternativeName>
</protein>
<feature type="chain" id="PRO_0000191002" description="Dysbindin">
    <location>
        <begin position="1"/>
        <end position="352"/>
    </location>
</feature>
<feature type="region of interest" description="Dysbindin">
    <location>
        <begin position="173"/>
        <end position="325"/>
    </location>
</feature>
<feature type="region of interest" description="Disordered" evidence="4">
    <location>
        <begin position="267"/>
        <end position="352"/>
    </location>
</feature>
<feature type="coiled-coil region" evidence="3">
    <location>
        <begin position="88"/>
        <end position="176"/>
    </location>
</feature>
<feature type="short sequence motif" description="Nuclear export signal" evidence="1">
    <location>
        <begin position="243"/>
        <end position="256"/>
    </location>
</feature>
<feature type="compositionally biased region" description="Polar residues" evidence="4">
    <location>
        <begin position="274"/>
        <end position="285"/>
    </location>
</feature>
<feature type="compositionally biased region" description="Low complexity" evidence="4">
    <location>
        <begin position="286"/>
        <end position="301"/>
    </location>
</feature>
<feature type="modified residue" description="Phosphoserine" evidence="2">
    <location>
        <position position="11"/>
    </location>
</feature>
<feature type="modified residue" description="Phosphoserine" evidence="2">
    <location>
        <position position="315"/>
    </location>
</feature>
<feature type="modified residue" description="Phosphoserine" evidence="33">
    <location>
        <position position="340"/>
    </location>
</feature>
<feature type="modified residue" description="Phosphoserine" evidence="33">
    <location>
        <position position="343"/>
    </location>
</feature>
<feature type="splice variant" id="VSP_021939" description="In isoform 3." evidence="31">
    <location>
        <begin position="1"/>
        <end position="81"/>
    </location>
</feature>
<feature type="splice variant" id="VSP_009024" description="In isoform 2." evidence="30">
    <location>
        <begin position="171"/>
        <end position="222"/>
    </location>
</feature>
<feature type="sequence conflict" description="In Ref. 3; BAE35265." evidence="32" ref="3">
    <original>A</original>
    <variation>T</variation>
    <location>
        <position position="251"/>
    </location>
</feature>
<feature type="sequence conflict" description="In Ref. 3; BAE35265." evidence="32" ref="3">
    <original>E</original>
    <variation>G</variation>
    <location>
        <position position="280"/>
    </location>
</feature>
<name>DTBP1_MOUSE</name>
<gene>
    <name type="primary">Dtnbp1</name>
    <name type="synonym">Bloc1s8</name>
    <name type="synonym">Sdy</name>
</gene>
<comment type="function">
    <text evidence="6 8 9 10 11 14 15 17 18 22 23 24 25 26 27 28">Component of the BLOC-1 complex, a complex that is required for normal biogenesis of lysosome-related organelles (LRO), such as platelet dense granules and melanosomes. In concert with the AP-3 complex, the BLOC-1 complex is required to target membrane protein cargos into vesicles assembled at cell bodies for delivery into neurites and nerve terminals. The BLOC-1 complex, in association with SNARE proteins, is also proposed to be involved in neurite extension. Associates with the BLOC-2 complex to facilitate the transport of TYRP1 independent of AP-3 function. Plays a role in synaptic vesicle trafficking and in neurotransmitter release. Plays a role in the regulation of cell surface exposure of DRD2. May play a role in actin cytoskeleton reorganization and neurite outgrowth. May modulate MAPK8 phosphorylation. Appears to promote neuronal transmission and viability through regulating the expression of SNAP25 and SYN1, modulating PI3-kinase-Akt signaling and influencing glutamatergic release. Regulates the expression of SYN1 through binding to its promoter. Modulates prefrontal cortical activity via the dopamine/D2 pathway.</text>
</comment>
<comment type="subunit">
    <text evidence="1 5 6 7 9 11 12 13 19 22 23 28 29">Interacts with AP3M1 and TRIM32. Interacts (isoform 1 and isoform 2 only) with the DNA-dependent protein kinase complex DNA-PK; the interaction phosphorylates DTNBP1 in vitro. Interacts directly in this complex with XRCC5 and XRCC6. Interacts with XPO1; the interaction exports DTNBP1 out of the nucleus (By similarity). Component of the biogenesis of lysosome-related organelles complex 1 (BLOC-1) composed of BLOC1S1, BLOC1S2, BLOC1S3, BLOC1S4, BLOC1S5, BLOC1S6, DTNBP1/BLOC1S7 and SNAPIN/BLOC1S8. The BLOC-1 complex associates with the AP-3 protein complex and membrane protein cargos. This BLOC-1 complex also associates with the BLOC-2 complex in endosomes. Binds to DTNA and DTNB but may not be a physiological binding partner (PubMed:16448387, PubMed:16980328). Interacts (via its coiled coil domain) with KXD1. Interacts with AP3B2, BLOC1S5, BLOC1S6, CMYA5, PI4K2, RNF151 and SNAPIN/BLOC1S8. Interacts with XPO1; the interaction exports DTNBP1 out of the nucleus.</text>
</comment>
<comment type="interaction">
    <interactant intactId="EBI-643186">
        <id>Q91WZ8</id>
    </interactant>
    <interactant intactId="EBI-782290">
        <id>Q70KF4</id>
        <label>Cmya5</label>
    </interactant>
    <organismsDiffer>false</organismsDiffer>
    <experiments>5</experiments>
</comment>
<comment type="interaction">
    <interactant intactId="EBI-643186">
        <id>Q91WZ8</id>
    </interactant>
    <interactant intactId="EBI-296019">
        <id>Q9D2N4</id>
        <label>Dtna</label>
    </interactant>
    <organismsDiffer>false</organismsDiffer>
    <experiments>3</experiments>
</comment>
<comment type="subcellular location">
    <molecule>Isoform 1</molecule>
    <subcellularLocation>
        <location>Cytoplasm</location>
    </subcellularLocation>
    <subcellularLocation>
        <location>Cytoplasmic vesicle membrane</location>
        <topology>Peripheral membrane protein</topology>
        <orientation>Cytoplasmic side</orientation>
    </subcellularLocation>
    <subcellularLocation>
        <location>Endosome membrane</location>
        <topology>Peripheral membrane protein</topology>
        <orientation>Cytoplasmic side</orientation>
    </subcellularLocation>
    <subcellularLocation>
        <location>Melanosome membrane</location>
        <topology>Peripheral membrane protein</topology>
        <orientation>Cytoplasmic side</orientation>
    </subcellularLocation>
    <subcellularLocation>
        <location>Postsynaptic density</location>
    </subcellularLocation>
    <subcellularLocation>
        <location evidence="1">Endoplasmic reticulum</location>
    </subcellularLocation>
    <subcellularLocation>
        <location>Nucleus</location>
    </subcellularLocation>
    <text evidence="1">Mainly cytoplasmic but shuttles between the cytoplasm and nucleus. Exported out of the nucleus via its NES in a XPO1-dependent manner. Nuclear localization is required for regulation of the expression of genes such as SYN1. Detected in neuron cell bodies, axons and dendrites. Mainly located to the postsynaptic density. Detected at tubulovesicular elements in the vicinity of the Golgi apparatus and of melanosomes. Occasionally detected at the membrane of pigmented melanosomes in cultured melanoma cells (By similarity). The BLOC-1 complex associates with the BLOC-2 complex in early endosome-associated tubules. Associated with the AP-3 complex at presynaptic terminals.</text>
</comment>
<comment type="subcellular location">
    <molecule>Isoform 3</molecule>
    <subcellularLocation>
        <location>Cytoplasm</location>
    </subcellularLocation>
    <subcellularLocation>
        <location evidence="1">Cytoplasmic vesicle membrane</location>
        <topology evidence="1">Peripheral membrane protein</topology>
        <orientation evidence="1">Cytoplasmic side</orientation>
    </subcellularLocation>
    <subcellularLocation>
        <location evidence="1">Cytoplasmic vesicle</location>
        <location evidence="1">Secretory vesicle</location>
        <location evidence="1">Synaptic vesicle membrane</location>
        <topology evidence="1">Peripheral membrane protein</topology>
        <orientation evidence="1">Cytoplasmic side</orientation>
    </subcellularLocation>
    <subcellularLocation>
        <location evidence="1">Endosome membrane</location>
        <topology evidence="1">Peripheral membrane protein</topology>
        <orientation evidence="1">Cytoplasmic side</orientation>
    </subcellularLocation>
    <subcellularLocation>
        <location evidence="1">Melanosome membrane</location>
        <topology evidence="1">Peripheral membrane protein</topology>
        <orientation evidence="1">Cytoplasmic side</orientation>
    </subcellularLocation>
    <subcellularLocation>
        <location>Postsynaptic cell membrane</location>
    </subcellularLocation>
    <subcellularLocation>
        <location evidence="1">Endoplasmic reticulum</location>
    </subcellularLocation>
    <text evidence="1">Exclusivley cytoplasmic. Predominantly found in the postsynaptic density (PSD). Little association with synaptic vesicles (By similarity). The BLOC-1 complex associates with the BLOC-2 complex in early endosome-associated tubules. Vesicle membranes and microtubules. Associated with the AP-3 complex at presynaptic terminals.</text>
</comment>
<comment type="alternative products">
    <event type="alternative splicing"/>
    <isoform>
        <id>Q91WZ8-1</id>
        <name>1</name>
        <name>Dysbindin 1-A</name>
        <sequence type="displayed"/>
    </isoform>
    <isoform>
        <id>Q91WZ8-2</id>
        <name>2</name>
        <sequence type="described" ref="VSP_009024"/>
    </isoform>
    <isoform>
        <id>Q91WZ8-3</id>
        <name>3</name>
        <name>Dysbindin 1-C</name>
        <sequence type="described" ref="VSP_021939"/>
    </isoform>
</comment>
<comment type="tissue specificity">
    <text evidence="5 6 10 12 22 23">Detected in brain, in hippocampus and dentate gyrus neurons. Detected at axon bundles and axon terminals, notably in the cerebellum and hippocampus. Detected in neuropil in hippocampus, lateral septum, basal ganglia and substantia nigra. Highly expressed in pyramidal cells of hippocampus CA2 and CA3. Detected at the heart and skeletal muscle sarcolemma (at protein level). Ubiquitously expressed. The highest expression is observed in testis, liver, kidney, brain, heart and lung. Expressed at lower levels in stomach and small intestine.</text>
</comment>
<comment type="PTM">
    <text evidence="1">Ubiquitinated by TRIM32. Ubiquitination leads to DTNBP1 degradation.</text>
</comment>
<comment type="disease">
    <text evidence="6 14 15 16 17 20 21 26">Defects in Dtnbp1 are the cause of the sandy (sdy) mutant phenotype, a model for human Hermansky-Pudlak syndrome (HPS). Sdy mice lack dysbindin expression; they have a characteristic sandy coat color and have much fewer melanosomes in the retinal pigment epithelium and choroid. They are fully viable, but present behavioral abnormalities. They have prolonged bleeding times due to platelet storage pool deficiency, and lysosomal storage defects. The number of electron-opaque platelet dense granules is severely reduced, and the platelet serotonin content is strongly reduced. Secretion of lysosomal enzymes from kidney and from thrombin-stimulated platelets is depressed 2- and 3-fold, and ceroid pigment is present in kidney. Sandy mice also display impaired long-term memory retention and working memory and schizophrenia-like behavioral abnormalities. Vesicle morphology and kinetics of transmitter release are affected in both neuroendocrine cells and hippocampal synapses, characterized by larger vesicle size, slower quantal release, fewer release events and reduced readily releasable pool (RRP). Expression levels of SYN1 are lower in both the cortex and the hippocampal formation (HF).</text>
</comment>
<comment type="disruption phenotype">
    <text evidence="8 18 27">Null mice exhibit cognitive abnormalities including schizophrenia-related behaviors such as impaired working memory under stressful conditions. There is higher acoustic startle reactivity to stimuli. Pyramidal neurons are hypoexcitable on dopamine-2 receptor stimulation. There is reduced expression of Ca(2+)/calmodulin-dependent protein kinase II (CaMKII) and CaMKKbeta in the medial prefrontal cortex mPFC. There is increased expression levels of cell surface dopamine receptor D2 in cortical neurons. Expression levels of SYN1 are lower in both cortex and in the hippocampal formation (HF).</text>
</comment>
<comment type="similarity">
    <text evidence="32">Belongs to the dysbindin family.</text>
</comment>
<comment type="sequence caution" evidence="32">
    <conflict type="frameshift">
        <sequence resource="EMBL-CDS" id="AAH48682"/>
    </conflict>
</comment>
<comment type="sequence caution" evidence="32">
    <conflict type="erroneous initiation">
        <sequence resource="EMBL-CDS" id="BAE35265"/>
    </conflict>
    <text>Extended N-terminus.</text>
</comment>
<organism>
    <name type="scientific">Mus musculus</name>
    <name type="common">Mouse</name>
    <dbReference type="NCBI Taxonomy" id="10090"/>
    <lineage>
        <taxon>Eukaryota</taxon>
        <taxon>Metazoa</taxon>
        <taxon>Chordata</taxon>
        <taxon>Craniata</taxon>
        <taxon>Vertebrata</taxon>
        <taxon>Euteleostomi</taxon>
        <taxon>Mammalia</taxon>
        <taxon>Eutheria</taxon>
        <taxon>Euarchontoglires</taxon>
        <taxon>Glires</taxon>
        <taxon>Rodentia</taxon>
        <taxon>Myomorpha</taxon>
        <taxon>Muroidea</taxon>
        <taxon>Muridae</taxon>
        <taxon>Murinae</taxon>
        <taxon>Mus</taxon>
        <taxon>Mus</taxon>
    </lineage>
</organism>
<dbReference type="EMBL" id="AJ404859">
    <property type="protein sequence ID" value="CAC37976.1"/>
    <property type="molecule type" value="mRNA"/>
</dbReference>
<dbReference type="EMBL" id="AY265461">
    <property type="protein sequence ID" value="AAP91871.1"/>
    <property type="molecule type" value="mRNA"/>
</dbReference>
<dbReference type="EMBL" id="AK010924">
    <property type="protein sequence ID" value="BAB27270.2"/>
    <property type="molecule type" value="mRNA"/>
</dbReference>
<dbReference type="EMBL" id="AK159656">
    <property type="protein sequence ID" value="BAE35265.1"/>
    <property type="status" value="ALT_INIT"/>
    <property type="molecule type" value="mRNA"/>
</dbReference>
<dbReference type="EMBL" id="BC018350">
    <property type="protein sequence ID" value="AAH18350.1"/>
    <property type="molecule type" value="mRNA"/>
</dbReference>
<dbReference type="EMBL" id="BC048682">
    <property type="protein sequence ID" value="AAH48682.1"/>
    <property type="status" value="ALT_FRAME"/>
    <property type="molecule type" value="mRNA"/>
</dbReference>
<dbReference type="EMBL" id="BC058574">
    <property type="protein sequence ID" value="AAH58574.1"/>
    <property type="molecule type" value="mRNA"/>
</dbReference>
<dbReference type="CCDS" id="CCDS36647.1">
    <molecule id="Q91WZ8-1"/>
</dbReference>
<dbReference type="RefSeq" id="NP_080048.2">
    <molecule id="Q91WZ8-1"/>
    <property type="nucleotide sequence ID" value="NM_025772.4"/>
</dbReference>
<dbReference type="SMR" id="Q91WZ8"/>
<dbReference type="BioGRID" id="220491">
    <property type="interactions" value="6"/>
</dbReference>
<dbReference type="ComplexPortal" id="CPX-1913">
    <property type="entry name" value="BLOC-1 complex"/>
</dbReference>
<dbReference type="CORUM" id="Q91WZ8"/>
<dbReference type="FunCoup" id="Q91WZ8">
    <property type="interactions" value="252"/>
</dbReference>
<dbReference type="IntAct" id="Q91WZ8">
    <property type="interactions" value="15"/>
</dbReference>
<dbReference type="MINT" id="Q91WZ8"/>
<dbReference type="STRING" id="10090.ENSMUSP00000072170"/>
<dbReference type="iPTMnet" id="Q91WZ8"/>
<dbReference type="PhosphoSitePlus" id="Q91WZ8"/>
<dbReference type="PaxDb" id="10090-ENSMUSP00000072170"/>
<dbReference type="PeptideAtlas" id="Q91WZ8"/>
<dbReference type="ProteomicsDB" id="279814">
    <molecule id="Q91WZ8-1"/>
</dbReference>
<dbReference type="ProteomicsDB" id="279815">
    <molecule id="Q91WZ8-2"/>
</dbReference>
<dbReference type="ProteomicsDB" id="279816">
    <molecule id="Q91WZ8-3"/>
</dbReference>
<dbReference type="Pumba" id="Q91WZ8"/>
<dbReference type="Antibodypedia" id="25035">
    <property type="antibodies" value="439 antibodies from 35 providers"/>
</dbReference>
<dbReference type="DNASU" id="94245"/>
<dbReference type="Ensembl" id="ENSMUST00000072329.15">
    <molecule id="Q91WZ8-1"/>
    <property type="protein sequence ID" value="ENSMUSP00000072170.8"/>
    <property type="gene ID" value="ENSMUSG00000057531.16"/>
</dbReference>
<dbReference type="Ensembl" id="ENSMUST00000222583.2">
    <molecule id="Q91WZ8-3"/>
    <property type="protein sequence ID" value="ENSMUSP00000152812.2"/>
    <property type="gene ID" value="ENSMUSG00000057531.16"/>
</dbReference>
<dbReference type="GeneID" id="94245"/>
<dbReference type="KEGG" id="mmu:94245"/>
<dbReference type="UCSC" id="uc007qgw.1">
    <molecule id="Q91WZ8-1"/>
    <property type="organism name" value="mouse"/>
</dbReference>
<dbReference type="AGR" id="MGI:2137586"/>
<dbReference type="CTD" id="84062"/>
<dbReference type="MGI" id="MGI:2137586">
    <property type="gene designation" value="Dtnbp1"/>
</dbReference>
<dbReference type="VEuPathDB" id="HostDB:ENSMUSG00000057531"/>
<dbReference type="eggNOG" id="ENOG502QRS9">
    <property type="taxonomic scope" value="Eukaryota"/>
</dbReference>
<dbReference type="GeneTree" id="ENSGT00940000156479"/>
<dbReference type="HOGENOM" id="CLU_071074_0_0_1"/>
<dbReference type="InParanoid" id="Q91WZ8"/>
<dbReference type="OMA" id="KSWFLLH"/>
<dbReference type="OrthoDB" id="2445127at2759"/>
<dbReference type="PhylomeDB" id="Q91WZ8"/>
<dbReference type="TreeFam" id="TF332997"/>
<dbReference type="Reactome" id="R-MMU-432722">
    <property type="pathway name" value="Golgi Associated Vesicle Biogenesis"/>
</dbReference>
<dbReference type="BioGRID-ORCS" id="94245">
    <property type="hits" value="2 hits in 79 CRISPR screens"/>
</dbReference>
<dbReference type="ChiTaRS" id="Dtnbp1">
    <property type="organism name" value="mouse"/>
</dbReference>
<dbReference type="PRO" id="PR:Q91WZ8"/>
<dbReference type="Proteomes" id="UP000000589">
    <property type="component" value="Chromosome 13"/>
</dbReference>
<dbReference type="RNAct" id="Q91WZ8">
    <property type="molecule type" value="protein"/>
</dbReference>
<dbReference type="Bgee" id="ENSMUSG00000057531">
    <property type="expression patterns" value="Expressed in interventricular septum and 258 other cell types or tissues"/>
</dbReference>
<dbReference type="ExpressionAtlas" id="Q91WZ8">
    <property type="expression patterns" value="baseline and differential"/>
</dbReference>
<dbReference type="GO" id="GO:0032279">
    <property type="term" value="C:asymmetric synapse"/>
    <property type="evidence" value="ECO:0000314"/>
    <property type="project" value="SynGO"/>
</dbReference>
<dbReference type="GO" id="GO:0030424">
    <property type="term" value="C:axon"/>
    <property type="evidence" value="ECO:0000314"/>
    <property type="project" value="UniProtKB"/>
</dbReference>
<dbReference type="GO" id="GO:1904115">
    <property type="term" value="C:axon cytoplasm"/>
    <property type="evidence" value="ECO:0007669"/>
    <property type="project" value="GOC"/>
</dbReference>
<dbReference type="GO" id="GO:0031083">
    <property type="term" value="C:BLOC-1 complex"/>
    <property type="evidence" value="ECO:0000314"/>
    <property type="project" value="UniProtKB"/>
</dbReference>
<dbReference type="GO" id="GO:0005737">
    <property type="term" value="C:cytoplasm"/>
    <property type="evidence" value="ECO:0000314"/>
    <property type="project" value="UniProtKB"/>
</dbReference>
<dbReference type="GO" id="GO:0043197">
    <property type="term" value="C:dendritic spine"/>
    <property type="evidence" value="ECO:0000314"/>
    <property type="project" value="UniProtKB"/>
</dbReference>
<dbReference type="GO" id="GO:0005789">
    <property type="term" value="C:endoplasmic reticulum membrane"/>
    <property type="evidence" value="ECO:0000314"/>
    <property type="project" value="UniProtKB"/>
</dbReference>
<dbReference type="GO" id="GO:0010008">
    <property type="term" value="C:endosome membrane"/>
    <property type="evidence" value="ECO:0007669"/>
    <property type="project" value="UniProtKB-SubCell"/>
</dbReference>
<dbReference type="GO" id="GO:0098978">
    <property type="term" value="C:glutamatergic synapse"/>
    <property type="evidence" value="ECO:0000314"/>
    <property type="project" value="SynGO"/>
</dbReference>
<dbReference type="GO" id="GO:0030426">
    <property type="term" value="C:growth cone"/>
    <property type="evidence" value="ECO:0000314"/>
    <property type="project" value="UniProtKB"/>
</dbReference>
<dbReference type="GO" id="GO:0098686">
    <property type="term" value="C:hippocampal mossy fiber to CA3 synapse"/>
    <property type="evidence" value="ECO:0000314"/>
    <property type="project" value="SynGO"/>
</dbReference>
<dbReference type="GO" id="GO:0033162">
    <property type="term" value="C:melanosome membrane"/>
    <property type="evidence" value="ECO:0007669"/>
    <property type="project" value="UniProtKB-SubCell"/>
</dbReference>
<dbReference type="GO" id="GO:0015630">
    <property type="term" value="C:microtubule cytoskeleton"/>
    <property type="evidence" value="ECO:0007669"/>
    <property type="project" value="Ensembl"/>
</dbReference>
<dbReference type="GO" id="GO:0030496">
    <property type="term" value="C:midbody"/>
    <property type="evidence" value="ECO:0007669"/>
    <property type="project" value="Ensembl"/>
</dbReference>
<dbReference type="GO" id="GO:0043005">
    <property type="term" value="C:neuron projection"/>
    <property type="evidence" value="ECO:0000250"/>
    <property type="project" value="UniProtKB"/>
</dbReference>
<dbReference type="GO" id="GO:0043025">
    <property type="term" value="C:neuronal cell body"/>
    <property type="evidence" value="ECO:0007669"/>
    <property type="project" value="Ensembl"/>
</dbReference>
<dbReference type="GO" id="GO:0005634">
    <property type="term" value="C:nucleus"/>
    <property type="evidence" value="ECO:0000314"/>
    <property type="project" value="UniProtKB"/>
</dbReference>
<dbReference type="GO" id="GO:0005886">
    <property type="term" value="C:plasma membrane"/>
    <property type="evidence" value="ECO:0000314"/>
    <property type="project" value="MGI"/>
</dbReference>
<dbReference type="GO" id="GO:0014069">
    <property type="term" value="C:postsynaptic density"/>
    <property type="evidence" value="ECO:0000314"/>
    <property type="project" value="UniProtKB"/>
</dbReference>
<dbReference type="GO" id="GO:0045211">
    <property type="term" value="C:postsynaptic membrane"/>
    <property type="evidence" value="ECO:0007669"/>
    <property type="project" value="UniProtKB-SubCell"/>
</dbReference>
<dbReference type="GO" id="GO:0042383">
    <property type="term" value="C:sarcolemma"/>
    <property type="evidence" value="ECO:0000314"/>
    <property type="project" value="UniProtKB"/>
</dbReference>
<dbReference type="GO" id="GO:0016528">
    <property type="term" value="C:sarcoplasm"/>
    <property type="evidence" value="ECO:0000314"/>
    <property type="project" value="MGI"/>
</dbReference>
<dbReference type="GO" id="GO:0098685">
    <property type="term" value="C:Schaffer collateral - CA1 synapse"/>
    <property type="evidence" value="ECO:0000314"/>
    <property type="project" value="SynGO"/>
</dbReference>
<dbReference type="GO" id="GO:0030672">
    <property type="term" value="C:synaptic vesicle membrane"/>
    <property type="evidence" value="ECO:0000314"/>
    <property type="project" value="UniProtKB"/>
</dbReference>
<dbReference type="GO" id="GO:0030036">
    <property type="term" value="P:actin cytoskeleton organization"/>
    <property type="evidence" value="ECO:0000314"/>
    <property type="project" value="UniProtKB"/>
</dbReference>
<dbReference type="GO" id="GO:0008089">
    <property type="term" value="P:anterograde axonal transport"/>
    <property type="evidence" value="ECO:0000315"/>
    <property type="project" value="UniProtKB"/>
</dbReference>
<dbReference type="GO" id="GO:0048490">
    <property type="term" value="P:anterograde synaptic vesicle transport"/>
    <property type="evidence" value="ECO:0000315"/>
    <property type="project" value="UniProtKB"/>
</dbReference>
<dbReference type="GO" id="GO:0007596">
    <property type="term" value="P:blood coagulation"/>
    <property type="evidence" value="ECO:0000315"/>
    <property type="project" value="MGI"/>
</dbReference>
<dbReference type="GO" id="GO:0060271">
    <property type="term" value="P:cilium assembly"/>
    <property type="evidence" value="ECO:0000315"/>
    <property type="project" value="MGI"/>
</dbReference>
<dbReference type="GO" id="GO:0048813">
    <property type="term" value="P:dendrite morphogenesis"/>
    <property type="evidence" value="ECO:0000315"/>
    <property type="project" value="MGI"/>
</dbReference>
<dbReference type="GO" id="GO:0001822">
    <property type="term" value="P:kidney development"/>
    <property type="evidence" value="ECO:0000315"/>
    <property type="project" value="MGI"/>
</dbReference>
<dbReference type="GO" id="GO:0032438">
    <property type="term" value="P:melanosome organization"/>
    <property type="evidence" value="ECO:0000303"/>
    <property type="project" value="ComplexPortal"/>
</dbReference>
<dbReference type="GO" id="GO:0007613">
    <property type="term" value="P:memory"/>
    <property type="evidence" value="ECO:0000315"/>
    <property type="project" value="MGI"/>
</dbReference>
<dbReference type="GO" id="GO:0007517">
    <property type="term" value="P:muscle organ development"/>
    <property type="evidence" value="ECO:0000304"/>
    <property type="project" value="MGI"/>
</dbReference>
<dbReference type="GO" id="GO:0061002">
    <property type="term" value="P:negative regulation of dendritic spine morphogenesis"/>
    <property type="evidence" value="ECO:0007669"/>
    <property type="project" value="Ensembl"/>
</dbReference>
<dbReference type="GO" id="GO:0031175">
    <property type="term" value="P:neuron projection development"/>
    <property type="evidence" value="ECO:0000250"/>
    <property type="project" value="UniProtKB"/>
</dbReference>
<dbReference type="GO" id="GO:0048812">
    <property type="term" value="P:neuron projection morphogenesis"/>
    <property type="evidence" value="ECO:0000314"/>
    <property type="project" value="UniProtKB"/>
</dbReference>
<dbReference type="GO" id="GO:0006996">
    <property type="term" value="P:organelle organization"/>
    <property type="evidence" value="ECO:0000314"/>
    <property type="project" value="UniProtKB"/>
</dbReference>
<dbReference type="GO" id="GO:0060155">
    <property type="term" value="P:platelet dense granule organization"/>
    <property type="evidence" value="ECO:0000315"/>
    <property type="project" value="MGI"/>
</dbReference>
<dbReference type="GO" id="GO:0010628">
    <property type="term" value="P:positive regulation of gene expression"/>
    <property type="evidence" value="ECO:0000314"/>
    <property type="project" value="UniProtKB"/>
</dbReference>
<dbReference type="GO" id="GO:0061646">
    <property type="term" value="P:positive regulation of glutamate neurotransmitter secretion in response to membrane depolarization"/>
    <property type="evidence" value="ECO:0007669"/>
    <property type="project" value="Ensembl"/>
</dbReference>
<dbReference type="GO" id="GO:0001956">
    <property type="term" value="P:positive regulation of neurotransmitter secretion"/>
    <property type="evidence" value="ECO:0000315"/>
    <property type="project" value="UniProtKB"/>
</dbReference>
<dbReference type="GO" id="GO:0002092">
    <property type="term" value="P:positive regulation of receptor internalization"/>
    <property type="evidence" value="ECO:0007669"/>
    <property type="project" value="Ensembl"/>
</dbReference>
<dbReference type="GO" id="GO:0071806">
    <property type="term" value="P:protein transmembrane transport"/>
    <property type="evidence" value="ECO:0000315"/>
    <property type="project" value="MGI"/>
</dbReference>
<dbReference type="GO" id="GO:0060159">
    <property type="term" value="P:regulation of dopamine receptor signaling pathway"/>
    <property type="evidence" value="ECO:0000250"/>
    <property type="project" value="UniProtKB"/>
</dbReference>
<dbReference type="GO" id="GO:0014059">
    <property type="term" value="P:regulation of dopamine secretion"/>
    <property type="evidence" value="ECO:0000315"/>
    <property type="project" value="UniProtKB"/>
</dbReference>
<dbReference type="GO" id="GO:0043506">
    <property type="term" value="P:regulation of JUN kinase activity"/>
    <property type="evidence" value="ECO:0000315"/>
    <property type="project" value="CACAO"/>
</dbReference>
<dbReference type="GO" id="GO:2000300">
    <property type="term" value="P:regulation of synaptic vesicle exocytosis"/>
    <property type="evidence" value="ECO:0000314"/>
    <property type="project" value="SynGO"/>
</dbReference>
<dbReference type="GO" id="GO:0060041">
    <property type="term" value="P:retina development in camera-type eye"/>
    <property type="evidence" value="ECO:0007669"/>
    <property type="project" value="Ensembl"/>
</dbReference>
<dbReference type="InterPro" id="IPR007531">
    <property type="entry name" value="Dysbindin"/>
</dbReference>
<dbReference type="PANTHER" id="PTHR16294:SF5">
    <property type="entry name" value="DYSBINDIN"/>
    <property type="match status" value="1"/>
</dbReference>
<dbReference type="PANTHER" id="PTHR16294">
    <property type="entry name" value="DYSTROBREVIN BINDING PROTEIN 1 DYSBINDIN"/>
    <property type="match status" value="1"/>
</dbReference>
<dbReference type="Pfam" id="PF04440">
    <property type="entry name" value="Dysbindin"/>
    <property type="match status" value="1"/>
</dbReference>
<keyword id="KW-0015">Albinism</keyword>
<keyword id="KW-0025">Alternative splicing</keyword>
<keyword id="KW-1003">Cell membrane</keyword>
<keyword id="KW-0175">Coiled coil</keyword>
<keyword id="KW-0963">Cytoplasm</keyword>
<keyword id="KW-0968">Cytoplasmic vesicle</keyword>
<keyword id="KW-0256">Endoplasmic reticulum</keyword>
<keyword id="KW-0967">Endosome</keyword>
<keyword id="KW-0363">Hermansky-Pudlak syndrome</keyword>
<keyword id="KW-0472">Membrane</keyword>
<keyword id="KW-0539">Nucleus</keyword>
<keyword id="KW-0597">Phosphoprotein</keyword>
<keyword id="KW-0628">Postsynaptic cell membrane</keyword>
<keyword id="KW-1185">Reference proteome</keyword>
<keyword id="KW-0716">Sensory transduction</keyword>
<keyword id="KW-0770">Synapse</keyword>
<keyword id="KW-0832">Ubl conjugation</keyword>